<proteinExistence type="evidence at transcript level"/>
<comment type="function">
    <text>Activation of RuBisCO (ribulose-1,5-bisphosphate carboxylase/oxygenase; EC 4.1.1.39) involves the ATP-dependent carboxylation of the epsilon-amino group of lysine leading to a carbamate structure.</text>
</comment>
<comment type="subcellular location">
    <subcellularLocation>
        <location>Plastid</location>
        <location>Chloroplast stroma</location>
    </subcellularLocation>
</comment>
<comment type="similarity">
    <text evidence="3">Belongs to the RuBisCO activase family.</text>
</comment>
<feature type="transit peptide" description="Chloroplast" evidence="1">
    <location>
        <begin position="1"/>
        <end status="unknown"/>
    </location>
</feature>
<feature type="chain" id="PRO_0000030237" description="Ribulose bisphosphate carboxylase/oxygenase activase, chloroplastic">
    <location>
        <begin status="unknown"/>
        <end position="437"/>
    </location>
</feature>
<feature type="region of interest" description="Disordered" evidence="2">
    <location>
        <begin position="1"/>
        <end position="26"/>
    </location>
</feature>
<feature type="compositionally biased region" description="Polar residues" evidence="2">
    <location>
        <begin position="1"/>
        <end position="10"/>
    </location>
</feature>
<feature type="binding site" evidence="1">
    <location>
        <begin position="165"/>
        <end position="172"/>
    </location>
    <ligand>
        <name>ATP</name>
        <dbReference type="ChEBI" id="CHEBI:30616"/>
    </ligand>
</feature>
<dbReference type="EMBL" id="Z21794">
    <property type="protein sequence ID" value="CAA79857.1"/>
    <property type="molecule type" value="mRNA"/>
</dbReference>
<dbReference type="PIR" id="S39551">
    <property type="entry name" value="S39551"/>
</dbReference>
<dbReference type="RefSeq" id="NP_001280819.1">
    <property type="nucleotide sequence ID" value="NM_001293890.1"/>
</dbReference>
<dbReference type="SMR" id="Q40281"/>
<dbReference type="GeneID" id="103456062"/>
<dbReference type="KEGG" id="mdm:103456062"/>
<dbReference type="OrthoDB" id="2014558at2759"/>
<dbReference type="GO" id="GO:0009570">
    <property type="term" value="C:chloroplast stroma"/>
    <property type="evidence" value="ECO:0007669"/>
    <property type="project" value="UniProtKB-SubCell"/>
</dbReference>
<dbReference type="GO" id="GO:0009579">
    <property type="term" value="C:thylakoid"/>
    <property type="evidence" value="ECO:0007669"/>
    <property type="project" value="TreeGrafter"/>
</dbReference>
<dbReference type="GO" id="GO:0005524">
    <property type="term" value="F:ATP binding"/>
    <property type="evidence" value="ECO:0007669"/>
    <property type="project" value="UniProtKB-KW"/>
</dbReference>
<dbReference type="GO" id="GO:0016887">
    <property type="term" value="F:ATP hydrolysis activity"/>
    <property type="evidence" value="ECO:0007669"/>
    <property type="project" value="InterPro"/>
</dbReference>
<dbReference type="GO" id="GO:0046863">
    <property type="term" value="F:ribulose-1,5-bisphosphate carboxylase/oxygenase activator activity"/>
    <property type="evidence" value="ECO:0007669"/>
    <property type="project" value="TreeGrafter"/>
</dbReference>
<dbReference type="FunFam" id="1.10.8.1070:FF:000001">
    <property type="entry name" value="Ribulose bisphosphate carboxylase/oxygenase activase, chloroplastic"/>
    <property type="match status" value="1"/>
</dbReference>
<dbReference type="FunFam" id="3.40.50.300:FF:000258">
    <property type="entry name" value="Ribulose bisphosphate carboxylase/oxygenase activase, chloroplastic"/>
    <property type="match status" value="1"/>
</dbReference>
<dbReference type="Gene3D" id="1.10.8.1070">
    <property type="match status" value="1"/>
</dbReference>
<dbReference type="Gene3D" id="3.40.50.300">
    <property type="entry name" value="P-loop containing nucleotide triphosphate hydrolases"/>
    <property type="match status" value="1"/>
</dbReference>
<dbReference type="InterPro" id="IPR003959">
    <property type="entry name" value="ATPase_AAA_core"/>
</dbReference>
<dbReference type="InterPro" id="IPR027417">
    <property type="entry name" value="P-loop_NTPase"/>
</dbReference>
<dbReference type="InterPro" id="IPR044960">
    <property type="entry name" value="RCA-like"/>
</dbReference>
<dbReference type="InterPro" id="IPR048571">
    <property type="entry name" value="RuBisCO_activase_AAA_helical"/>
</dbReference>
<dbReference type="PANTHER" id="PTHR32429">
    <property type="match status" value="1"/>
</dbReference>
<dbReference type="PANTHER" id="PTHR32429:SF32">
    <property type="entry name" value="RIBULOSE BISPHOSPHATE CARBOXYLASE_OXYGENASE ACTIVASE, CHLOROPLASTIC"/>
    <property type="match status" value="1"/>
</dbReference>
<dbReference type="Pfam" id="PF00004">
    <property type="entry name" value="AAA"/>
    <property type="match status" value="1"/>
</dbReference>
<dbReference type="Pfam" id="PF21228">
    <property type="entry name" value="RuBisCO_activase_AAA_helical"/>
    <property type="match status" value="1"/>
</dbReference>
<dbReference type="SUPFAM" id="SSF52540">
    <property type="entry name" value="P-loop containing nucleoside triphosphate hydrolases"/>
    <property type="match status" value="1"/>
</dbReference>
<keyword id="KW-0067">ATP-binding</keyword>
<keyword id="KW-0150">Chloroplast</keyword>
<keyword id="KW-0547">Nucleotide-binding</keyword>
<keyword id="KW-0934">Plastid</keyword>
<keyword id="KW-0809">Transit peptide</keyword>
<organism>
    <name type="scientific">Malus domestica</name>
    <name type="common">Apple</name>
    <name type="synonym">Pyrus malus</name>
    <dbReference type="NCBI Taxonomy" id="3750"/>
    <lineage>
        <taxon>Eukaryota</taxon>
        <taxon>Viridiplantae</taxon>
        <taxon>Streptophyta</taxon>
        <taxon>Embryophyta</taxon>
        <taxon>Tracheophyta</taxon>
        <taxon>Spermatophyta</taxon>
        <taxon>Magnoliopsida</taxon>
        <taxon>eudicotyledons</taxon>
        <taxon>Gunneridae</taxon>
        <taxon>Pentapetalae</taxon>
        <taxon>rosids</taxon>
        <taxon>fabids</taxon>
        <taxon>Rosales</taxon>
        <taxon>Rosaceae</taxon>
        <taxon>Amygdaloideae</taxon>
        <taxon>Maleae</taxon>
        <taxon>Malus</taxon>
    </lineage>
</organism>
<protein>
    <recommendedName>
        <fullName>Ribulose bisphosphate carboxylase/oxygenase activase, chloroplastic</fullName>
        <shortName>RA</shortName>
        <shortName>RuBisCO activase</shortName>
    </recommendedName>
</protein>
<name>RCA_MALDO</name>
<reference key="1">
    <citation type="journal article" date="1993" name="Plant Mol. Biol.">
        <title>Developmental and circadian pattern of rubisco activase mRNA accumulation in apple plants.</title>
        <authorList>
            <person name="Watillon B."/>
            <person name="Kettmann R."/>
            <person name="Boxus P."/>
            <person name="Burny A."/>
        </authorList>
    </citation>
    <scope>NUCLEOTIDE SEQUENCE [MRNA]</scope>
</reference>
<evidence type="ECO:0000255" key="1"/>
<evidence type="ECO:0000256" key="2">
    <source>
        <dbReference type="SAM" id="MobiDB-lite"/>
    </source>
</evidence>
<evidence type="ECO:0000305" key="3"/>
<gene>
    <name type="primary">RCA</name>
</gene>
<accession>Q40281</accession>
<sequence>MATAVSTIGSVNRAPPNLNGSSSSASVPSSTFLGSSLKKVNSRFTNSKVSSGSLRIVASVDEDKQTDKDRWKGLAFDTSDDQQDITRGKGKVDSLFQAPQGSGTHFAIMSSYEYISTGLRQYNFDNNMDGYYIAPAFMDKLVVHITKNFMTLPNMKVPLILGIWGGKGQGKSFQCELVFAKMRISPIMMSAGELESGNAGEPAKLIRQRYREAADIIRKGKMCALFINDLDAGAGRLGGTTQYTVNNQMVNATLMNIADNPTNVQLPGMYNKEENPRVPIIVTGNDFSTLYAPLIRDGRMEKFYWAPTREDRIGVCIGIFRSDNVAKEDIVKLVDTFPGQSIDFFGALRARVYDDEVRKWITGVGVDSIGKKLVNSKEGPPTFEQPKMTIEKLLEYGNMLVQEQENVKRVQLADKYLSEAALGDANSDAMNTGTFYG</sequence>